<dbReference type="EMBL" id="CP000253">
    <property type="protein sequence ID" value="ABD31521.1"/>
    <property type="molecule type" value="Genomic_DNA"/>
</dbReference>
<dbReference type="RefSeq" id="WP_000004086.1">
    <property type="nucleotide sequence ID" value="NZ_LS483365.1"/>
</dbReference>
<dbReference type="RefSeq" id="YP_500970.1">
    <property type="nucleotide sequence ID" value="NC_007795.1"/>
</dbReference>
<dbReference type="PDB" id="5LI0">
    <property type="method" value="EM"/>
    <property type="resolution" value="3.80 A"/>
    <property type="chains" value="q=2-87"/>
</dbReference>
<dbReference type="PDB" id="5ND8">
    <property type="method" value="EM"/>
    <property type="resolution" value="3.70 A"/>
    <property type="chains" value="q=1-87"/>
</dbReference>
<dbReference type="PDB" id="5ND9">
    <property type="method" value="EM"/>
    <property type="resolution" value="3.70 A"/>
    <property type="chains" value="q=1-87"/>
</dbReference>
<dbReference type="PDB" id="5TCU">
    <property type="method" value="EM"/>
    <property type="resolution" value="3.90 A"/>
    <property type="chains" value="S8=5-84"/>
</dbReference>
<dbReference type="PDB" id="6YEF">
    <property type="method" value="EM"/>
    <property type="resolution" value="3.20 A"/>
    <property type="chains" value="q=1-87"/>
</dbReference>
<dbReference type="PDB" id="7BGD">
    <property type="method" value="EM"/>
    <property type="resolution" value="3.20 A"/>
    <property type="chains" value="q=1-87"/>
</dbReference>
<dbReference type="PDB" id="7KWG">
    <property type="method" value="EM"/>
    <property type="resolution" value="3.75 A"/>
    <property type="chains" value="q=1-87"/>
</dbReference>
<dbReference type="PDB" id="7NHL">
    <property type="method" value="EM"/>
    <property type="resolution" value="3.10 A"/>
    <property type="chains" value="r=1-87"/>
</dbReference>
<dbReference type="PDB" id="7NHM">
    <property type="method" value="EM"/>
    <property type="resolution" value="3.10 A"/>
    <property type="chains" value="r=1-87"/>
</dbReference>
<dbReference type="PDB" id="8BH6">
    <property type="method" value="EM"/>
    <property type="resolution" value="3.70 A"/>
    <property type="chains" value="q=1-87"/>
</dbReference>
<dbReference type="PDB" id="8BH7">
    <property type="method" value="EM"/>
    <property type="resolution" value="4.23 A"/>
    <property type="chains" value="q=1-87"/>
</dbReference>
<dbReference type="PDB" id="8BYV">
    <property type="method" value="EM"/>
    <property type="resolution" value="2.89 A"/>
    <property type="chains" value="q=1-87"/>
</dbReference>
<dbReference type="PDB" id="8P2F">
    <property type="method" value="EM"/>
    <property type="resolution" value="2.44 A"/>
    <property type="chains" value="r=1-87"/>
</dbReference>
<dbReference type="PDB" id="8P2G">
    <property type="method" value="EM"/>
    <property type="resolution" value="2.02 A"/>
    <property type="chains" value="r=1-87"/>
</dbReference>
<dbReference type="PDB" id="8P2H">
    <property type="method" value="EM"/>
    <property type="resolution" value="2.49 A"/>
    <property type="chains" value="r=1-87"/>
</dbReference>
<dbReference type="PDBsum" id="5LI0"/>
<dbReference type="PDBsum" id="5ND8"/>
<dbReference type="PDBsum" id="5ND9"/>
<dbReference type="PDBsum" id="5TCU"/>
<dbReference type="PDBsum" id="6YEF"/>
<dbReference type="PDBsum" id="7BGD"/>
<dbReference type="PDBsum" id="7KWG"/>
<dbReference type="PDBsum" id="7NHL"/>
<dbReference type="PDBsum" id="7NHM"/>
<dbReference type="PDBsum" id="8BH6"/>
<dbReference type="PDBsum" id="8BH7"/>
<dbReference type="PDBsum" id="8BYV"/>
<dbReference type="PDBsum" id="8P2F"/>
<dbReference type="PDBsum" id="8P2G"/>
<dbReference type="PDBsum" id="8P2H"/>
<dbReference type="EMDB" id="EMD-10791"/>
<dbReference type="EMDB" id="EMD-12178"/>
<dbReference type="EMDB" id="EMD-12332"/>
<dbReference type="EMDB" id="EMD-12333"/>
<dbReference type="EMDB" id="EMD-16048"/>
<dbReference type="EMDB" id="EMD-16049"/>
<dbReference type="EMDB" id="EMD-16334"/>
<dbReference type="EMDB" id="EMD-17363"/>
<dbReference type="EMDB" id="EMD-17364"/>
<dbReference type="EMDB" id="EMD-17365"/>
<dbReference type="EMDB" id="EMD-23052"/>
<dbReference type="EMDB" id="EMD-3624"/>
<dbReference type="EMDB" id="EMD-3625"/>
<dbReference type="EMDB" id="EMD-4050"/>
<dbReference type="EMDB" id="EMD-8402"/>
<dbReference type="SMR" id="Q2FW15"/>
<dbReference type="IntAct" id="Q2FW15">
    <property type="interactions" value="1"/>
</dbReference>
<dbReference type="STRING" id="93061.SAOUHSC_02503"/>
<dbReference type="PaxDb" id="1280-SAXN108_2490"/>
<dbReference type="GeneID" id="3920879"/>
<dbReference type="GeneID" id="98346553"/>
<dbReference type="KEGG" id="sao:SAOUHSC_02503"/>
<dbReference type="PATRIC" id="fig|93061.5.peg.2258"/>
<dbReference type="eggNOG" id="COG0186">
    <property type="taxonomic scope" value="Bacteria"/>
</dbReference>
<dbReference type="HOGENOM" id="CLU_073626_1_0_9"/>
<dbReference type="OrthoDB" id="9811714at2"/>
<dbReference type="PRO" id="PR:Q2FW15"/>
<dbReference type="Proteomes" id="UP000008816">
    <property type="component" value="Chromosome"/>
</dbReference>
<dbReference type="GO" id="GO:0022627">
    <property type="term" value="C:cytosolic small ribosomal subunit"/>
    <property type="evidence" value="ECO:0000318"/>
    <property type="project" value="GO_Central"/>
</dbReference>
<dbReference type="GO" id="GO:0019843">
    <property type="term" value="F:rRNA binding"/>
    <property type="evidence" value="ECO:0007669"/>
    <property type="project" value="UniProtKB-UniRule"/>
</dbReference>
<dbReference type="GO" id="GO:0003735">
    <property type="term" value="F:structural constituent of ribosome"/>
    <property type="evidence" value="ECO:0000318"/>
    <property type="project" value="GO_Central"/>
</dbReference>
<dbReference type="GO" id="GO:0006412">
    <property type="term" value="P:translation"/>
    <property type="evidence" value="ECO:0007669"/>
    <property type="project" value="UniProtKB-UniRule"/>
</dbReference>
<dbReference type="CDD" id="cd00364">
    <property type="entry name" value="Ribosomal_uS17"/>
    <property type="match status" value="1"/>
</dbReference>
<dbReference type="FunFam" id="2.40.50.140:FF:000026">
    <property type="entry name" value="30S ribosomal protein S17"/>
    <property type="match status" value="1"/>
</dbReference>
<dbReference type="Gene3D" id="2.40.50.140">
    <property type="entry name" value="Nucleic acid-binding proteins"/>
    <property type="match status" value="1"/>
</dbReference>
<dbReference type="HAMAP" id="MF_01345_B">
    <property type="entry name" value="Ribosomal_uS17_B"/>
    <property type="match status" value="1"/>
</dbReference>
<dbReference type="InterPro" id="IPR012340">
    <property type="entry name" value="NA-bd_OB-fold"/>
</dbReference>
<dbReference type="InterPro" id="IPR000266">
    <property type="entry name" value="Ribosomal_uS17"/>
</dbReference>
<dbReference type="InterPro" id="IPR019984">
    <property type="entry name" value="Ribosomal_uS17_bact/chlr"/>
</dbReference>
<dbReference type="InterPro" id="IPR019979">
    <property type="entry name" value="Ribosomal_uS17_CS"/>
</dbReference>
<dbReference type="NCBIfam" id="NF004123">
    <property type="entry name" value="PRK05610.1"/>
    <property type="match status" value="1"/>
</dbReference>
<dbReference type="NCBIfam" id="TIGR03635">
    <property type="entry name" value="uS17_bact"/>
    <property type="match status" value="1"/>
</dbReference>
<dbReference type="PANTHER" id="PTHR10744">
    <property type="entry name" value="40S RIBOSOMAL PROTEIN S11 FAMILY MEMBER"/>
    <property type="match status" value="1"/>
</dbReference>
<dbReference type="PANTHER" id="PTHR10744:SF1">
    <property type="entry name" value="SMALL RIBOSOMAL SUBUNIT PROTEIN US17M"/>
    <property type="match status" value="1"/>
</dbReference>
<dbReference type="Pfam" id="PF00366">
    <property type="entry name" value="Ribosomal_S17"/>
    <property type="match status" value="1"/>
</dbReference>
<dbReference type="PRINTS" id="PR00973">
    <property type="entry name" value="RIBOSOMALS17"/>
</dbReference>
<dbReference type="SUPFAM" id="SSF50249">
    <property type="entry name" value="Nucleic acid-binding proteins"/>
    <property type="match status" value="1"/>
</dbReference>
<dbReference type="PROSITE" id="PS00056">
    <property type="entry name" value="RIBOSOMAL_S17"/>
    <property type="match status" value="1"/>
</dbReference>
<organism>
    <name type="scientific">Staphylococcus aureus (strain NCTC 8325 / PS 47)</name>
    <dbReference type="NCBI Taxonomy" id="93061"/>
    <lineage>
        <taxon>Bacteria</taxon>
        <taxon>Bacillati</taxon>
        <taxon>Bacillota</taxon>
        <taxon>Bacilli</taxon>
        <taxon>Bacillales</taxon>
        <taxon>Staphylococcaceae</taxon>
        <taxon>Staphylococcus</taxon>
    </lineage>
</organism>
<protein>
    <recommendedName>
        <fullName evidence="1">Small ribosomal subunit protein uS17</fullName>
    </recommendedName>
    <alternativeName>
        <fullName evidence="2">30S ribosomal protein S17</fullName>
    </alternativeName>
</protein>
<evidence type="ECO:0000255" key="1">
    <source>
        <dbReference type="HAMAP-Rule" id="MF_01345"/>
    </source>
</evidence>
<evidence type="ECO:0000305" key="2"/>
<evidence type="ECO:0007829" key="3">
    <source>
        <dbReference type="PDB" id="8BYV"/>
    </source>
</evidence>
<sequence>MSERNDRKVYVGKVVSDKMDKTITVLVETYKTHKLYGKRVKYSKKYKTHDENNSAKLGDIVKIQETRPLSATKRFRLVEIVEESVII</sequence>
<keyword id="KW-0002">3D-structure</keyword>
<keyword id="KW-1185">Reference proteome</keyword>
<keyword id="KW-0687">Ribonucleoprotein</keyword>
<keyword id="KW-0689">Ribosomal protein</keyword>
<keyword id="KW-0694">RNA-binding</keyword>
<keyword id="KW-0699">rRNA-binding</keyword>
<comment type="function">
    <text evidence="1">One of the primary rRNA binding proteins, it binds specifically to the 5'-end of 16S ribosomal RNA.</text>
</comment>
<comment type="subunit">
    <text evidence="1">Part of the 30S ribosomal subunit.</text>
</comment>
<comment type="similarity">
    <text evidence="1">Belongs to the universal ribosomal protein uS17 family.</text>
</comment>
<reference key="1">
    <citation type="book" date="2006" name="Gram positive pathogens, 2nd edition">
        <title>The Staphylococcus aureus NCTC 8325 genome.</title>
        <editorList>
            <person name="Fischetti V."/>
            <person name="Novick R."/>
            <person name="Ferretti J."/>
            <person name="Portnoy D."/>
            <person name="Rood J."/>
        </editorList>
        <authorList>
            <person name="Gillaspy A.F."/>
            <person name="Worrell V."/>
            <person name="Orvis J."/>
            <person name="Roe B.A."/>
            <person name="Dyer D.W."/>
            <person name="Iandolo J.J."/>
        </authorList>
    </citation>
    <scope>NUCLEOTIDE SEQUENCE [LARGE SCALE GENOMIC DNA]</scope>
    <source>
        <strain>NCTC 8325 / PS 47</strain>
    </source>
</reference>
<feature type="chain" id="PRO_0000255703" description="Small ribosomal subunit protein uS17">
    <location>
        <begin position="1"/>
        <end position="87"/>
    </location>
</feature>
<feature type="strand" evidence="3">
    <location>
        <begin position="9"/>
        <end position="14"/>
    </location>
</feature>
<feature type="strand" evidence="3">
    <location>
        <begin position="22"/>
        <end position="32"/>
    </location>
</feature>
<feature type="strand" evidence="3">
    <location>
        <begin position="34"/>
        <end position="36"/>
    </location>
</feature>
<feature type="strand" evidence="3">
    <location>
        <begin position="39"/>
        <end position="49"/>
    </location>
</feature>
<feature type="strand" evidence="3">
    <location>
        <begin position="60"/>
        <end position="70"/>
    </location>
</feature>
<feature type="strand" evidence="3">
    <location>
        <begin position="73"/>
        <end position="82"/>
    </location>
</feature>
<proteinExistence type="evidence at protein level"/>
<name>RS17_STAA8</name>
<accession>Q2FW15</accession>
<gene>
    <name evidence="1" type="primary">rpsQ</name>
    <name type="ordered locus">SAOUHSC_02503</name>
</gene>